<dbReference type="EMBL" id="CM002238">
    <property type="protein sequence ID" value="ESA43305.1"/>
    <property type="molecule type" value="Genomic_DNA"/>
</dbReference>
<dbReference type="RefSeq" id="XP_011393787.1">
    <property type="nucleotide sequence ID" value="XM_011395485.1"/>
</dbReference>
<dbReference type="PDB" id="6YWS">
    <property type="method" value="EM"/>
    <property type="resolution" value="2.74 A"/>
    <property type="chains" value="c=1-110"/>
</dbReference>
<dbReference type="PDB" id="6YWV">
    <property type="method" value="EM"/>
    <property type="resolution" value="3.03 A"/>
    <property type="chains" value="c=1-110"/>
</dbReference>
<dbReference type="PDB" id="6YWX">
    <property type="method" value="EM"/>
    <property type="resolution" value="3.10 A"/>
    <property type="chains" value="c=1-110"/>
</dbReference>
<dbReference type="PDBsum" id="6YWS"/>
<dbReference type="PDBsum" id="6YWV"/>
<dbReference type="PDBsum" id="6YWX"/>
<dbReference type="EMDB" id="EMD-10973"/>
<dbReference type="EMDB" id="EMD-10977"/>
<dbReference type="EMDB" id="EMD-10978"/>
<dbReference type="SMR" id="U9W8F2"/>
<dbReference type="FunCoup" id="U9W8F2">
    <property type="interactions" value="69"/>
</dbReference>
<dbReference type="STRING" id="367110.U9W8F2"/>
<dbReference type="PaxDb" id="5141-EFNCRP00000000444"/>
<dbReference type="EnsemblFungi" id="ESA43305">
    <property type="protein sequence ID" value="ESA43305"/>
    <property type="gene ID" value="NCU00211"/>
</dbReference>
<dbReference type="GeneID" id="3872743"/>
<dbReference type="KEGG" id="ncr:NCU00211"/>
<dbReference type="VEuPathDB" id="FungiDB:NCU00211"/>
<dbReference type="HOGENOM" id="CLU_141719_0_0_1"/>
<dbReference type="OrthoDB" id="2332379at2759"/>
<dbReference type="Proteomes" id="UP000001805">
    <property type="component" value="Chromosome 3, Linkage Group III"/>
</dbReference>
<dbReference type="GO" id="GO:0005762">
    <property type="term" value="C:mitochondrial large ribosomal subunit"/>
    <property type="evidence" value="ECO:0000318"/>
    <property type="project" value="GO_Central"/>
</dbReference>
<dbReference type="GO" id="GO:0003735">
    <property type="term" value="F:structural constituent of ribosome"/>
    <property type="evidence" value="ECO:0000318"/>
    <property type="project" value="GO_Central"/>
</dbReference>
<dbReference type="InterPro" id="IPR016340">
    <property type="entry name" value="Ribosomal_mL60"/>
</dbReference>
<dbReference type="PANTHER" id="PTHR28271">
    <property type="entry name" value="54S RIBOSOMAL PROTEIN L31, MITOCHONDRIAL"/>
    <property type="match status" value="1"/>
</dbReference>
<dbReference type="PANTHER" id="PTHR28271:SF1">
    <property type="entry name" value="LARGE RIBOSOMAL SUBUNIT PROTEIN ML60"/>
    <property type="match status" value="1"/>
</dbReference>
<dbReference type="Pfam" id="PF09784">
    <property type="entry name" value="L31"/>
    <property type="match status" value="1"/>
</dbReference>
<dbReference type="PIRSF" id="PIRSF002216">
    <property type="entry name" value="MRPL31_prd"/>
    <property type="match status" value="1"/>
</dbReference>
<evidence type="ECO:0000269" key="1">
    <source>
    </source>
</evidence>
<evidence type="ECO:0000269" key="2">
    <source>
    </source>
</evidence>
<evidence type="ECO:0000303" key="3">
    <source>
    </source>
</evidence>
<evidence type="ECO:0000305" key="4"/>
<evidence type="ECO:0000305" key="5">
    <source>
    </source>
</evidence>
<evidence type="ECO:0007744" key="6">
    <source>
        <dbReference type="PDB" id="6YWS"/>
    </source>
</evidence>
<evidence type="ECO:0007744" key="7">
    <source>
        <dbReference type="PDB" id="6YWV"/>
    </source>
</evidence>
<proteinExistence type="evidence at protein level"/>
<organism>
    <name type="scientific">Neurospora crassa (strain ATCC 24698 / 74-OR23-1A / CBS 708.71 / DSM 1257 / FGSC 987)</name>
    <dbReference type="NCBI Taxonomy" id="367110"/>
    <lineage>
        <taxon>Eukaryota</taxon>
        <taxon>Fungi</taxon>
        <taxon>Dikarya</taxon>
        <taxon>Ascomycota</taxon>
        <taxon>Pezizomycotina</taxon>
        <taxon>Sordariomycetes</taxon>
        <taxon>Sordariomycetidae</taxon>
        <taxon>Sordariales</taxon>
        <taxon>Sordariaceae</taxon>
        <taxon>Neurospora</taxon>
    </lineage>
</organism>
<feature type="chain" id="PRO_0000458597" description="Large ribosomal subunit protein mL60">
    <location>
        <begin position="1"/>
        <end position="110"/>
    </location>
</feature>
<keyword id="KW-0002">3D-structure</keyword>
<keyword id="KW-0496">Mitochondrion</keyword>
<keyword id="KW-1185">Reference proteome</keyword>
<keyword id="KW-0687">Ribonucleoprotein</keyword>
<keyword id="KW-0689">Ribosomal protein</keyword>
<reference key="1">
    <citation type="journal article" date="2003" name="Nature">
        <title>The genome sequence of the filamentous fungus Neurospora crassa.</title>
        <authorList>
            <person name="Galagan J.E."/>
            <person name="Calvo S.E."/>
            <person name="Borkovich K.A."/>
            <person name="Selker E.U."/>
            <person name="Read N.D."/>
            <person name="Jaffe D.B."/>
            <person name="FitzHugh W."/>
            <person name="Ma L.-J."/>
            <person name="Smirnov S."/>
            <person name="Purcell S."/>
            <person name="Rehman B."/>
            <person name="Elkins T."/>
            <person name="Engels R."/>
            <person name="Wang S."/>
            <person name="Nielsen C.B."/>
            <person name="Butler J."/>
            <person name="Endrizzi M."/>
            <person name="Qui D."/>
            <person name="Ianakiev P."/>
            <person name="Bell-Pedersen D."/>
            <person name="Nelson M.A."/>
            <person name="Werner-Washburne M."/>
            <person name="Selitrennikoff C.P."/>
            <person name="Kinsey J.A."/>
            <person name="Braun E.L."/>
            <person name="Zelter A."/>
            <person name="Schulte U."/>
            <person name="Kothe G.O."/>
            <person name="Jedd G."/>
            <person name="Mewes H.-W."/>
            <person name="Staben C."/>
            <person name="Marcotte E."/>
            <person name="Greenberg D."/>
            <person name="Roy A."/>
            <person name="Foley K."/>
            <person name="Naylor J."/>
            <person name="Stange-Thomann N."/>
            <person name="Barrett R."/>
            <person name="Gnerre S."/>
            <person name="Kamal M."/>
            <person name="Kamvysselis M."/>
            <person name="Mauceli E.W."/>
            <person name="Bielke C."/>
            <person name="Rudd S."/>
            <person name="Frishman D."/>
            <person name="Krystofova S."/>
            <person name="Rasmussen C."/>
            <person name="Metzenberg R.L."/>
            <person name="Perkins D.D."/>
            <person name="Kroken S."/>
            <person name="Cogoni C."/>
            <person name="Macino G."/>
            <person name="Catcheside D.E.A."/>
            <person name="Li W."/>
            <person name="Pratt R.J."/>
            <person name="Osmani S.A."/>
            <person name="DeSouza C.P.C."/>
            <person name="Glass N.L."/>
            <person name="Orbach M.J."/>
            <person name="Berglund J.A."/>
            <person name="Voelker R."/>
            <person name="Yarden O."/>
            <person name="Plamann M."/>
            <person name="Seiler S."/>
            <person name="Dunlap J.C."/>
            <person name="Radford A."/>
            <person name="Aramayo R."/>
            <person name="Natvig D.O."/>
            <person name="Alex L.A."/>
            <person name="Mannhaupt G."/>
            <person name="Ebbole D.J."/>
            <person name="Freitag M."/>
            <person name="Paulsen I."/>
            <person name="Sachs M.S."/>
            <person name="Lander E.S."/>
            <person name="Nusbaum C."/>
            <person name="Birren B.W."/>
        </authorList>
    </citation>
    <scope>NUCLEOTIDE SEQUENCE [LARGE SCALE GENOMIC DNA]</scope>
    <source>
        <strain>ATCC 24698 / 74-OR23-1A / CBS 708.71 / DSM 1257 / FGSC 987</strain>
    </source>
</reference>
<reference key="2">
    <citation type="journal article" date="2006" name="FEMS Microbiol. Lett.">
        <title>Identification and comparative analysis of the large subunit mitochondrial ribosomal proteins of Neurospora crassa.</title>
        <authorList>
            <person name="Gan X."/>
            <person name="Arita K."/>
            <person name="Isono S."/>
            <person name="Kitakawa M."/>
            <person name="Yoshino K."/>
            <person name="Yonezawa K."/>
            <person name="Kato A."/>
            <person name="Inoue H."/>
            <person name="Isono K."/>
        </authorList>
    </citation>
    <scope>IDENTIFICATION IN THE MITOCHONDRIAL RIBOSOMAL LARGE COMPLEX</scope>
    <scope>IDENTIFICATION BY MASS SPECTROMETRY</scope>
</reference>
<reference evidence="6 7" key="3">
    <citation type="journal article" date="2020" name="Nat. Commun.">
        <title>Analysis of translating mitoribosome reveals functional characteristics of translation in mitochondria of fungi.</title>
        <authorList>
            <person name="Itoh Y."/>
            <person name="Naschberger A."/>
            <person name="Mortezaei N."/>
            <person name="Herrmann J.M."/>
            <person name="Amunts A."/>
        </authorList>
    </citation>
    <scope>STRUCTURE BY ELECTRON MICROSCOPY (2.74 ANGSTROMS)</scope>
</reference>
<sequence length="110" mass="13103">MFGAFRFTNPLSGGLLWKIPWRMSKFQKLRQRRRLRAVDNVVATIENALAKKGETVKAVERWRAEMPTEAEMLPKDKYTIFDRKEKRYRKGIHKLPKWTRVSQRVNPPGY</sequence>
<comment type="function">
    <text evidence="5">Component of the mitochondrial ribosome (mitoribosome), a dedicated translation machinery responsible for the synthesis of mitochondrial genome-encoded proteins, including at least some of the essential transmembrane subunits of the mitochondrial respiratory chain. The mitoribosomes are attached to the mitochondrial inner membrane and translation products are cotranslationally integrated into the membrane.</text>
</comment>
<comment type="subunit">
    <text evidence="1 2">Component of the mitochondrial large ribosomal subunit (mt-LSU). Mature N.crassa 74S mitochondrial ribosomes consist of a small (37S) and a large (54S) subunit. The 37S small subunit contains a 16S ribosomal RNA (16S mt-rRNA) and 32 different proteins. The 54S large subunit contains a 23S rRNA (23S mt-rRNA) and 42 different proteins.</text>
</comment>
<comment type="subcellular location">
    <subcellularLocation>
        <location evidence="1 2">Mitochondrion</location>
    </subcellularLocation>
</comment>
<comment type="similarity">
    <text evidence="4">Belongs to the mitochondrion-specific ribosomal protein mL60 family.</text>
</comment>
<name>RM31_NEUCR</name>
<gene>
    <name type="primary">mrpl31</name>
    <name type="ORF">NCU00211</name>
</gene>
<accession>U9W8F2</accession>
<protein>
    <recommendedName>
        <fullName evidence="3">Large ribosomal subunit protein mL60</fullName>
    </recommendedName>
</protein>